<sequence>MIQSEEDLEYERNVEMFRLKRLIAKLESMKGSGTSMITLIINFKDQINIHARMLAEEVGKASNIKSRVTRQNVTDALTSTLEKLKLYNKTPPNGLVIFCGLVQQEDGGEKMIKIDLEPFKPINTTLYKCDSVFHTEEVRKLLEDNDKFGFIIMDGNGSLFGTLQGSTRTVLLKFNVDLPKKHGRGGQSANRFARIRIEKRRNYLRKVAESTTACFITNDMPNVKGLILAGSAEFKNDLQKSDLFDLRLQPIVIKLVDISYGGENGFNQAIELSSDALKSVKFIHEKKVIGKFFDEIAKDTGKYVFGIKDTLEAMDMGSVDILIIYENLEYNRLILRDANDNIVNETLHKNKCPSGSKYKNETTGVEYEVLDNIPLTEWFMDNYKKYVSHLEIVTDKSSEGSQFLKGFGGIGGILRYKMDTDFDDTENNNEWNDDDFI</sequence>
<dbReference type="EMBL" id="AB086368">
    <property type="protein sequence ID" value="BAD90943.1"/>
    <property type="molecule type" value="mRNA"/>
</dbReference>
<dbReference type="SMR" id="Q5CD97"/>
<dbReference type="GO" id="GO:0005737">
    <property type="term" value="C:cytoplasm"/>
    <property type="evidence" value="ECO:0007669"/>
    <property type="project" value="UniProtKB-SubCell"/>
</dbReference>
<dbReference type="GO" id="GO:0003747">
    <property type="term" value="F:translation release factor activity"/>
    <property type="evidence" value="ECO:0007669"/>
    <property type="project" value="InterPro"/>
</dbReference>
<dbReference type="FunFam" id="3.30.1330.30:FF:000006">
    <property type="entry name" value="Peptide chain release factor subunit 1"/>
    <property type="match status" value="1"/>
</dbReference>
<dbReference type="FunFam" id="3.30.420.60:FF:000003">
    <property type="entry name" value="Peptide chain release factor subunit 1"/>
    <property type="match status" value="1"/>
</dbReference>
<dbReference type="FunFam" id="3.30.960.10:FF:000003">
    <property type="entry name" value="Peptide chain release factor subunit 1"/>
    <property type="match status" value="1"/>
</dbReference>
<dbReference type="Gene3D" id="3.30.1330.30">
    <property type="match status" value="1"/>
</dbReference>
<dbReference type="Gene3D" id="3.30.960.10">
    <property type="entry name" value="eRF1 domain 1"/>
    <property type="match status" value="1"/>
</dbReference>
<dbReference type="Gene3D" id="3.30.420.60">
    <property type="entry name" value="eRF1 domain 2"/>
    <property type="match status" value="1"/>
</dbReference>
<dbReference type="InterPro" id="IPR042226">
    <property type="entry name" value="eFR1_2_sf"/>
</dbReference>
<dbReference type="InterPro" id="IPR005140">
    <property type="entry name" value="eRF1_1_Pelota"/>
</dbReference>
<dbReference type="InterPro" id="IPR024049">
    <property type="entry name" value="eRF1_1_sf"/>
</dbReference>
<dbReference type="InterPro" id="IPR005141">
    <property type="entry name" value="eRF1_2"/>
</dbReference>
<dbReference type="InterPro" id="IPR005142">
    <property type="entry name" value="eRF1_3"/>
</dbReference>
<dbReference type="InterPro" id="IPR004403">
    <property type="entry name" value="Peptide_chain-rel_eRF1/aRF1"/>
</dbReference>
<dbReference type="InterPro" id="IPR029064">
    <property type="entry name" value="Ribosomal_eL30-like_sf"/>
</dbReference>
<dbReference type="NCBIfam" id="TIGR03676">
    <property type="entry name" value="aRF1_eRF1"/>
    <property type="match status" value="1"/>
</dbReference>
<dbReference type="PANTHER" id="PTHR10113">
    <property type="entry name" value="PEPTIDE CHAIN RELEASE FACTOR SUBUNIT 1"/>
    <property type="match status" value="1"/>
</dbReference>
<dbReference type="Pfam" id="PF03463">
    <property type="entry name" value="eRF1_1"/>
    <property type="match status" value="1"/>
</dbReference>
<dbReference type="Pfam" id="PF03464">
    <property type="entry name" value="eRF1_2"/>
    <property type="match status" value="1"/>
</dbReference>
<dbReference type="Pfam" id="PF03465">
    <property type="entry name" value="eRF1_3"/>
    <property type="match status" value="1"/>
</dbReference>
<dbReference type="SMART" id="SM01194">
    <property type="entry name" value="eRF1_1"/>
    <property type="match status" value="1"/>
</dbReference>
<dbReference type="SUPFAM" id="SSF55315">
    <property type="entry name" value="L30e-like"/>
    <property type="match status" value="1"/>
</dbReference>
<dbReference type="SUPFAM" id="SSF55481">
    <property type="entry name" value="N-terminal domain of eukaryotic peptide chain release factor subunit 1, ERF1"/>
    <property type="match status" value="1"/>
</dbReference>
<dbReference type="SUPFAM" id="SSF53137">
    <property type="entry name" value="Translational machinery components"/>
    <property type="match status" value="1"/>
</dbReference>
<gene>
    <name type="primary">eRF1</name>
</gene>
<organism>
    <name type="scientific">Didinium nasutum</name>
    <dbReference type="NCBI Taxonomy" id="5997"/>
    <lineage>
        <taxon>Eukaryota</taxon>
        <taxon>Sar</taxon>
        <taxon>Alveolata</taxon>
        <taxon>Ciliophora</taxon>
        <taxon>Intramacronucleata</taxon>
        <taxon>Litostomatea</taxon>
        <taxon>Haptoria</taxon>
        <taxon>Haptorida</taxon>
        <taxon>Didiniidae</taxon>
        <taxon>Didinium</taxon>
    </lineage>
</organism>
<name>ERF1_DIDNA</name>
<evidence type="ECO:0000250" key="1"/>
<evidence type="ECO:0000305" key="2"/>
<keyword id="KW-0963">Cytoplasm</keyword>
<keyword id="KW-0648">Protein biosynthesis</keyword>
<protein>
    <recommendedName>
        <fullName>Eukaryotic peptide chain release factor subunit 1</fullName>
        <shortName>Eukaryotic release factor 1</shortName>
        <shortName>eRF1</shortName>
    </recommendedName>
</protein>
<comment type="function">
    <text evidence="1">Directs the termination of nascent peptide synthesis (translation) in response to the termination codons UAA and possibly also UAG and UGA.</text>
</comment>
<comment type="subunit">
    <text evidence="1">Heterodimer of two subunits, one of which binds GTP.</text>
</comment>
<comment type="subcellular location">
    <subcellularLocation>
        <location evidence="1">Cytoplasm</location>
    </subcellularLocation>
</comment>
<comment type="similarity">
    <text evidence="2">Belongs to the eukaryotic release factor 1 family.</text>
</comment>
<reference key="1">
    <citation type="journal article" date="2005" name="Gene">
        <title>Newly sequenced eRF1s from ciliates: the diversity of stop codon usage and the molecular surfaces that are important for stop codon interactions.</title>
        <authorList>
            <person name="Kim O.T.P."/>
            <person name="Yura K."/>
            <person name="Go N."/>
            <person name="Harumoto T."/>
        </authorList>
    </citation>
    <scope>NUCLEOTIDE SEQUENCE [MRNA]</scope>
    <source>
        <strain>Stock 777 / ATCC 30399</strain>
    </source>
</reference>
<proteinExistence type="evidence at transcript level"/>
<accession>Q5CD97</accession>
<feature type="chain" id="PRO_0000143151" description="Eukaryotic peptide chain release factor subunit 1">
    <location>
        <begin position="1"/>
        <end position="437"/>
    </location>
</feature>